<accession>Q5A6T8</accession>
<accession>A0A1D8PSL0</accession>
<protein>
    <recommendedName>
        <fullName>White-opaque regulator 3</fullName>
    </recommendedName>
</protein>
<comment type="function">
    <text evidence="4">Transcription factor that modulates the white-opaque switch.</text>
</comment>
<comment type="subcellular location">
    <subcellularLocation>
        <location evidence="6">Nucleus</location>
    </subcellularLocation>
</comment>
<comment type="induction">
    <text evidence="3 5">Expression is induced in opaque cells and biofilm, and is regulated by WOR1.</text>
</comment>
<comment type="disruption phenotype">
    <text evidence="4">Stabilizes opaque cells at higher temperatures.</text>
</comment>
<proteinExistence type="evidence at protein level"/>
<reference key="1">
    <citation type="journal article" date="2004" name="Proc. Natl. Acad. Sci. U.S.A.">
        <title>The diploid genome sequence of Candida albicans.</title>
        <authorList>
            <person name="Jones T."/>
            <person name="Federspiel N.A."/>
            <person name="Chibana H."/>
            <person name="Dungan J."/>
            <person name="Kalman S."/>
            <person name="Magee B.B."/>
            <person name="Newport G."/>
            <person name="Thorstenson Y.R."/>
            <person name="Agabian N."/>
            <person name="Magee P.T."/>
            <person name="Davis R.W."/>
            <person name="Scherer S."/>
        </authorList>
    </citation>
    <scope>NUCLEOTIDE SEQUENCE [LARGE SCALE GENOMIC DNA]</scope>
    <source>
        <strain>SC5314 / ATCC MYA-2876</strain>
    </source>
</reference>
<reference key="2">
    <citation type="journal article" date="2007" name="Genome Biol.">
        <title>Assembly of the Candida albicans genome into sixteen supercontigs aligned on the eight chromosomes.</title>
        <authorList>
            <person name="van het Hoog M."/>
            <person name="Rast T.J."/>
            <person name="Martchenko M."/>
            <person name="Grindle S."/>
            <person name="Dignard D."/>
            <person name="Hogues H."/>
            <person name="Cuomo C."/>
            <person name="Berriman M."/>
            <person name="Scherer S."/>
            <person name="Magee B.B."/>
            <person name="Whiteway M."/>
            <person name="Chibana H."/>
            <person name="Nantel A."/>
            <person name="Magee P.T."/>
        </authorList>
    </citation>
    <scope>GENOME REANNOTATION</scope>
    <source>
        <strain>SC5314 / ATCC MYA-2876</strain>
    </source>
</reference>
<reference key="3">
    <citation type="journal article" date="2013" name="Genome Biol.">
        <title>Assembly of a phased diploid Candida albicans genome facilitates allele-specific measurements and provides a simple model for repeat and indel structure.</title>
        <authorList>
            <person name="Muzzey D."/>
            <person name="Schwartz K."/>
            <person name="Weissman J.S."/>
            <person name="Sherlock G."/>
        </authorList>
    </citation>
    <scope>NUCLEOTIDE SEQUENCE [LARGE SCALE GENOMIC DNA]</scope>
    <scope>GENOME REANNOTATION</scope>
    <source>
        <strain>SC5314 / ATCC MYA-2876</strain>
    </source>
</reference>
<reference key="4">
    <citation type="journal article" date="2012" name="Cell">
        <title>A recently evolved transcriptional network controls biofilm development in Candida albicans.</title>
        <authorList>
            <person name="Nobile C.J."/>
            <person name="Fox E.P."/>
            <person name="Nett J.E."/>
            <person name="Sorrells T.R."/>
            <person name="Mitrovich Q.M."/>
            <person name="Hernday A.D."/>
            <person name="Tuch B.B."/>
            <person name="Andes D.R."/>
            <person name="Johnson A.D."/>
        </authorList>
    </citation>
    <scope>INDUCTION</scope>
</reference>
<reference key="5">
    <citation type="journal article" date="2013" name="Mol. Microbiol.">
        <title>Structure of the transcriptional network controlling white-opaque switching in Candida albicans.</title>
        <authorList>
            <person name="Hernday A.D."/>
            <person name="Lohse M.B."/>
            <person name="Fordyce P.M."/>
            <person name="Nobile C.J."/>
            <person name="DeRisi J.L."/>
            <person name="Johnson A.D."/>
        </authorList>
    </citation>
    <scope>INDUCTION</scope>
</reference>
<reference key="6">
    <citation type="journal article" date="2013" name="Proc. Natl. Acad. Sci. U.S.A.">
        <title>Identification and characterization of a previously undescribed family of sequence-specific DNA-binding domains.</title>
        <authorList>
            <person name="Lohse M.B."/>
            <person name="Hernday A.D."/>
            <person name="Fordyce P.M."/>
            <person name="Noiman L."/>
            <person name="Sorrells T.R."/>
            <person name="Hanson-Smith V."/>
            <person name="Nobile C.J."/>
            <person name="DeRisi J.L."/>
            <person name="Johnson A.D."/>
        </authorList>
    </citation>
    <scope>FUNCTION</scope>
    <scope>DNA-BINDING</scope>
    <scope>DISRUPTION PHENOTYPE</scope>
</reference>
<gene>
    <name type="primary">WOR3</name>
    <name type="ordered locus">CAALFM_CR03890WA</name>
    <name type="ORF">CaO19.467</name>
    <name type="ORF">CaO19.8098</name>
</gene>
<keyword id="KW-0479">Metal-binding</keyword>
<keyword id="KW-0539">Nucleus</keyword>
<keyword id="KW-1185">Reference proteome</keyword>
<keyword id="KW-0804">Transcription</keyword>
<keyword id="KW-0805">Transcription regulation</keyword>
<keyword id="KW-0862">Zinc</keyword>
<keyword id="KW-0863">Zinc-finger</keyword>
<organism>
    <name type="scientific">Candida albicans (strain SC5314 / ATCC MYA-2876)</name>
    <name type="common">Yeast</name>
    <dbReference type="NCBI Taxonomy" id="237561"/>
    <lineage>
        <taxon>Eukaryota</taxon>
        <taxon>Fungi</taxon>
        <taxon>Dikarya</taxon>
        <taxon>Ascomycota</taxon>
        <taxon>Saccharomycotina</taxon>
        <taxon>Pichiomycetes</taxon>
        <taxon>Debaryomycetaceae</taxon>
        <taxon>Candida/Lodderomyces clade</taxon>
        <taxon>Candida</taxon>
    </lineage>
</organism>
<feature type="chain" id="PRO_0000426093" description="White-opaque regulator 3">
    <location>
        <begin position="1"/>
        <end position="641"/>
    </location>
</feature>
<feature type="zinc finger region" description="dksA C4-type" evidence="1">
    <location>
        <begin position="317"/>
        <end position="337"/>
    </location>
</feature>
<feature type="region of interest" description="Disordered" evidence="2">
    <location>
        <begin position="13"/>
        <end position="38"/>
    </location>
</feature>
<feature type="region of interest" description="Disordered" evidence="2">
    <location>
        <begin position="146"/>
        <end position="245"/>
    </location>
</feature>
<feature type="region of interest" description="Disordered" evidence="2">
    <location>
        <begin position="258"/>
        <end position="287"/>
    </location>
</feature>
<feature type="region of interest" description="Disordered" evidence="2">
    <location>
        <begin position="366"/>
        <end position="409"/>
    </location>
</feature>
<feature type="region of interest" description="Disordered" evidence="2">
    <location>
        <begin position="480"/>
        <end position="507"/>
    </location>
</feature>
<feature type="region of interest" description="Disordered" evidence="2">
    <location>
        <begin position="522"/>
        <end position="550"/>
    </location>
</feature>
<feature type="region of interest" description="Disordered" evidence="2">
    <location>
        <begin position="568"/>
        <end position="641"/>
    </location>
</feature>
<feature type="compositionally biased region" description="Polar residues" evidence="2">
    <location>
        <begin position="13"/>
        <end position="27"/>
    </location>
</feature>
<feature type="compositionally biased region" description="Low complexity" evidence="2">
    <location>
        <begin position="28"/>
        <end position="38"/>
    </location>
</feature>
<feature type="compositionally biased region" description="Low complexity" evidence="2">
    <location>
        <begin position="151"/>
        <end position="160"/>
    </location>
</feature>
<feature type="compositionally biased region" description="Polar residues" evidence="2">
    <location>
        <begin position="161"/>
        <end position="172"/>
    </location>
</feature>
<feature type="compositionally biased region" description="Low complexity" evidence="2">
    <location>
        <begin position="173"/>
        <end position="184"/>
    </location>
</feature>
<feature type="compositionally biased region" description="Polar residues" evidence="2">
    <location>
        <begin position="193"/>
        <end position="204"/>
    </location>
</feature>
<feature type="compositionally biased region" description="Low complexity" evidence="2">
    <location>
        <begin position="216"/>
        <end position="242"/>
    </location>
</feature>
<feature type="compositionally biased region" description="Low complexity" evidence="2">
    <location>
        <begin position="264"/>
        <end position="280"/>
    </location>
</feature>
<feature type="compositionally biased region" description="Basic and acidic residues" evidence="2">
    <location>
        <begin position="379"/>
        <end position="400"/>
    </location>
</feature>
<feature type="compositionally biased region" description="Pro residues" evidence="2">
    <location>
        <begin position="486"/>
        <end position="495"/>
    </location>
</feature>
<feature type="compositionally biased region" description="Polar residues" evidence="2">
    <location>
        <begin position="522"/>
        <end position="533"/>
    </location>
</feature>
<feature type="compositionally biased region" description="Low complexity" evidence="2">
    <location>
        <begin position="569"/>
        <end position="579"/>
    </location>
</feature>
<feature type="compositionally biased region" description="Pro residues" evidence="2">
    <location>
        <begin position="597"/>
        <end position="606"/>
    </location>
</feature>
<feature type="compositionally biased region" description="Low complexity" evidence="2">
    <location>
        <begin position="610"/>
        <end position="641"/>
    </location>
</feature>
<dbReference type="EMBL" id="CP017630">
    <property type="protein sequence ID" value="AOW31127.1"/>
    <property type="molecule type" value="Genomic_DNA"/>
</dbReference>
<dbReference type="RefSeq" id="XP_717331.2">
    <property type="nucleotide sequence ID" value="XM_712238.2"/>
</dbReference>
<dbReference type="BioGRID" id="1223940">
    <property type="interactions" value="2"/>
</dbReference>
<dbReference type="STRING" id="237561.Q5A6T8"/>
<dbReference type="EnsemblFungi" id="CR_03890W_A-T">
    <property type="protein sequence ID" value="CR_03890W_A-T-p1"/>
    <property type="gene ID" value="CR_03890W_A"/>
</dbReference>
<dbReference type="GeneID" id="3641009"/>
<dbReference type="KEGG" id="cal:CAALFM_CR03890WA"/>
<dbReference type="CGD" id="CAL0000189623">
    <property type="gene designation" value="WOR3"/>
</dbReference>
<dbReference type="VEuPathDB" id="FungiDB:CR_03890W_A"/>
<dbReference type="eggNOG" id="ENOG502SNVY">
    <property type="taxonomic scope" value="Eukaryota"/>
</dbReference>
<dbReference type="HOGENOM" id="CLU_428921_0_0_1"/>
<dbReference type="InParanoid" id="Q5A6T8"/>
<dbReference type="OrthoDB" id="3998161at2759"/>
<dbReference type="PRO" id="PR:Q5A6T8"/>
<dbReference type="Proteomes" id="UP000000559">
    <property type="component" value="Chromosome R"/>
</dbReference>
<dbReference type="GO" id="GO:0005634">
    <property type="term" value="C:nucleus"/>
    <property type="evidence" value="ECO:0000314"/>
    <property type="project" value="CGD"/>
</dbReference>
<dbReference type="GO" id="GO:0043565">
    <property type="term" value="F:sequence-specific DNA binding"/>
    <property type="evidence" value="ECO:0000314"/>
    <property type="project" value="CGD"/>
</dbReference>
<dbReference type="GO" id="GO:0008270">
    <property type="term" value="F:zinc ion binding"/>
    <property type="evidence" value="ECO:0007669"/>
    <property type="project" value="UniProtKB-KW"/>
</dbReference>
<dbReference type="GO" id="GO:0044403">
    <property type="term" value="P:biological process involved in symbiotic interaction"/>
    <property type="evidence" value="ECO:0000315"/>
    <property type="project" value="CGD"/>
</dbReference>
<dbReference type="GO" id="GO:0044663">
    <property type="term" value="P:establishment or maintenance of cell type involved in phenotypic switching"/>
    <property type="evidence" value="ECO:0000315"/>
    <property type="project" value="CGD"/>
</dbReference>
<dbReference type="GO" id="GO:0007618">
    <property type="term" value="P:mating"/>
    <property type="evidence" value="ECO:0000315"/>
    <property type="project" value="CGD"/>
</dbReference>
<dbReference type="GO" id="GO:0036166">
    <property type="term" value="P:phenotypic switching"/>
    <property type="evidence" value="ECO:0000315"/>
    <property type="project" value="CGD"/>
</dbReference>
<dbReference type="GO" id="GO:1900241">
    <property type="term" value="P:positive regulation of phenotypic switching"/>
    <property type="evidence" value="ECO:0000315"/>
    <property type="project" value="CGD"/>
</dbReference>
<dbReference type="InterPro" id="IPR051647">
    <property type="entry name" value="Mediator_comp_sub12"/>
</dbReference>
<dbReference type="PANTHER" id="PTHR46007:SF8">
    <property type="entry name" value="C2H2-TYPE DOMAIN-CONTAINING PROTEIN"/>
    <property type="match status" value="1"/>
</dbReference>
<dbReference type="PANTHER" id="PTHR46007">
    <property type="entry name" value="MEDIATOR OF RNA POLYMERASE II TRANSCRIPTION SUBUNIT 12"/>
    <property type="match status" value="1"/>
</dbReference>
<dbReference type="PROSITE" id="PS51128">
    <property type="entry name" value="ZF_DKSA_2"/>
    <property type="match status" value="1"/>
</dbReference>
<name>WOR3_CANAL</name>
<evidence type="ECO:0000255" key="1">
    <source>
        <dbReference type="PROSITE-ProRule" id="PRU00510"/>
    </source>
</evidence>
<evidence type="ECO:0000256" key="2">
    <source>
        <dbReference type="SAM" id="MobiDB-lite"/>
    </source>
</evidence>
<evidence type="ECO:0000269" key="3">
    <source>
    </source>
</evidence>
<evidence type="ECO:0000269" key="4">
    <source>
    </source>
</evidence>
<evidence type="ECO:0000269" key="5">
    <source>
    </source>
</evidence>
<evidence type="ECO:0000305" key="6"/>
<sequence length="641" mass="73665">MDQTYLDQQQLDANVNHQQLSQDTNSIPQQQLQQQQQPLQQLQQYQQQPLSNANFSGDNRFQQYQPRVTPSVSSSQQSIHNTTGYVTMHSGNYTPNQQYGVPNQYTVLQQQPPRQQSYEENINPLSYNSNYRTLSAPIPPLHIQHQLASKQNQDQNQSQNRYEQSSMTSIHTNDNSSSVNNSPNTMMIKQEHSTFQPQHSNEGSSAYHPVDQQNHQQQQQPQQQQQPQQQQQPQQQQQPQQPMTRSICTRCKKGFDQPIIYPKSSNSTNGNNSNGQNSSSIPPPEPRTFKLCDHCRKLQRQRSRRWQKKTKDREGVCRRCGSEIPLAERRFVLCPSCRENLRLRKASRAAQGRCVHCSGPLDASILSKENEGNNNGDEQNNKSNEDQNNESRRGSQEKPARGASHKVCQRCRENDKIRRANLEKMGNCNRCAKALDPNEYGRNKVCFNCRTKKKRSPPENVTNTDEVRTSPIQNQYGMNMSHQYIQPPPPPPPPLMTGHHQFQPQPHMMGHEQMNTFTTMSNSGVAGIQQPNNGMVVGDQQQQQQQHNGSMQLQPTYYQSYVQMPPPLQLQQQQQQQQQHYSLDGIPQQPHSAPTSSFPPPPPPPLQLNQHQGLQQYSHAQQQQQQQHQQQQPYHQEYPNN</sequence>